<evidence type="ECO:0000255" key="1">
    <source>
        <dbReference type="HAMAP-Rule" id="MF_00580"/>
    </source>
</evidence>
<dbReference type="EMBL" id="CP000644">
    <property type="protein sequence ID" value="ABO91403.1"/>
    <property type="molecule type" value="Genomic_DNA"/>
</dbReference>
<dbReference type="RefSeq" id="WP_005318973.1">
    <property type="nucleotide sequence ID" value="NC_009348.1"/>
</dbReference>
<dbReference type="SMR" id="A4SR81"/>
<dbReference type="STRING" id="29491.GCA_000820065_04367"/>
<dbReference type="KEGG" id="asa:ASA_3432"/>
<dbReference type="eggNOG" id="COG0234">
    <property type="taxonomic scope" value="Bacteria"/>
</dbReference>
<dbReference type="HOGENOM" id="CLU_132825_1_1_6"/>
<dbReference type="Proteomes" id="UP000000225">
    <property type="component" value="Chromosome"/>
</dbReference>
<dbReference type="GO" id="GO:0005737">
    <property type="term" value="C:cytoplasm"/>
    <property type="evidence" value="ECO:0007669"/>
    <property type="project" value="UniProtKB-SubCell"/>
</dbReference>
<dbReference type="GO" id="GO:0005524">
    <property type="term" value="F:ATP binding"/>
    <property type="evidence" value="ECO:0007669"/>
    <property type="project" value="InterPro"/>
</dbReference>
<dbReference type="GO" id="GO:0046872">
    <property type="term" value="F:metal ion binding"/>
    <property type="evidence" value="ECO:0007669"/>
    <property type="project" value="TreeGrafter"/>
</dbReference>
<dbReference type="GO" id="GO:0044183">
    <property type="term" value="F:protein folding chaperone"/>
    <property type="evidence" value="ECO:0007669"/>
    <property type="project" value="InterPro"/>
</dbReference>
<dbReference type="GO" id="GO:0051087">
    <property type="term" value="F:protein-folding chaperone binding"/>
    <property type="evidence" value="ECO:0007669"/>
    <property type="project" value="TreeGrafter"/>
</dbReference>
<dbReference type="GO" id="GO:0051082">
    <property type="term" value="F:unfolded protein binding"/>
    <property type="evidence" value="ECO:0007669"/>
    <property type="project" value="TreeGrafter"/>
</dbReference>
<dbReference type="GO" id="GO:0051085">
    <property type="term" value="P:chaperone cofactor-dependent protein refolding"/>
    <property type="evidence" value="ECO:0007669"/>
    <property type="project" value="TreeGrafter"/>
</dbReference>
<dbReference type="CDD" id="cd00320">
    <property type="entry name" value="cpn10"/>
    <property type="match status" value="1"/>
</dbReference>
<dbReference type="FunFam" id="2.30.33.40:FF:000001">
    <property type="entry name" value="10 kDa chaperonin"/>
    <property type="match status" value="1"/>
</dbReference>
<dbReference type="Gene3D" id="2.30.33.40">
    <property type="entry name" value="GroES chaperonin"/>
    <property type="match status" value="1"/>
</dbReference>
<dbReference type="HAMAP" id="MF_00580">
    <property type="entry name" value="CH10"/>
    <property type="match status" value="1"/>
</dbReference>
<dbReference type="InterPro" id="IPR020818">
    <property type="entry name" value="Chaperonin_GroES"/>
</dbReference>
<dbReference type="InterPro" id="IPR037124">
    <property type="entry name" value="Chaperonin_GroES_sf"/>
</dbReference>
<dbReference type="InterPro" id="IPR018369">
    <property type="entry name" value="Chaprnonin_Cpn10_CS"/>
</dbReference>
<dbReference type="InterPro" id="IPR011032">
    <property type="entry name" value="GroES-like_sf"/>
</dbReference>
<dbReference type="NCBIfam" id="NF001526">
    <property type="entry name" value="PRK00364.1-1"/>
    <property type="match status" value="1"/>
</dbReference>
<dbReference type="NCBIfam" id="NF001527">
    <property type="entry name" value="PRK00364.1-2"/>
    <property type="match status" value="1"/>
</dbReference>
<dbReference type="NCBIfam" id="NF001531">
    <property type="entry name" value="PRK00364.2-2"/>
    <property type="match status" value="1"/>
</dbReference>
<dbReference type="PANTHER" id="PTHR10772">
    <property type="entry name" value="10 KDA HEAT SHOCK PROTEIN"/>
    <property type="match status" value="1"/>
</dbReference>
<dbReference type="PANTHER" id="PTHR10772:SF58">
    <property type="entry name" value="CO-CHAPERONIN GROES"/>
    <property type="match status" value="1"/>
</dbReference>
<dbReference type="Pfam" id="PF00166">
    <property type="entry name" value="Cpn10"/>
    <property type="match status" value="1"/>
</dbReference>
<dbReference type="PRINTS" id="PR00297">
    <property type="entry name" value="CHAPERONIN10"/>
</dbReference>
<dbReference type="SMART" id="SM00883">
    <property type="entry name" value="Cpn10"/>
    <property type="match status" value="1"/>
</dbReference>
<dbReference type="SUPFAM" id="SSF50129">
    <property type="entry name" value="GroES-like"/>
    <property type="match status" value="1"/>
</dbReference>
<dbReference type="PROSITE" id="PS00681">
    <property type="entry name" value="CHAPERONINS_CPN10"/>
    <property type="match status" value="1"/>
</dbReference>
<accession>A4SR81</accession>
<protein>
    <recommendedName>
        <fullName evidence="1">Co-chaperonin GroES</fullName>
    </recommendedName>
    <alternativeName>
        <fullName evidence="1">10 kDa chaperonin</fullName>
    </alternativeName>
    <alternativeName>
        <fullName evidence="1">Chaperonin-10</fullName>
        <shortName evidence="1">Cpn10</shortName>
    </alternativeName>
</protein>
<sequence length="97" mass="10269">MKIRPLHDRVIIKRIEAEAKSAGGIVLTGTAAQKSTRGEVLAVGTGRILDNGDVKALAVKVGDKVIFNEGYGVKTEKLDGQDVLILSETDILAIVEA</sequence>
<feature type="chain" id="PRO_1000025201" description="Co-chaperonin GroES">
    <location>
        <begin position="1"/>
        <end position="97"/>
    </location>
</feature>
<name>CH10_AERS4</name>
<keyword id="KW-0143">Chaperone</keyword>
<keyword id="KW-0963">Cytoplasm</keyword>
<organism>
    <name type="scientific">Aeromonas salmonicida (strain A449)</name>
    <dbReference type="NCBI Taxonomy" id="382245"/>
    <lineage>
        <taxon>Bacteria</taxon>
        <taxon>Pseudomonadati</taxon>
        <taxon>Pseudomonadota</taxon>
        <taxon>Gammaproteobacteria</taxon>
        <taxon>Aeromonadales</taxon>
        <taxon>Aeromonadaceae</taxon>
        <taxon>Aeromonas</taxon>
    </lineage>
</organism>
<gene>
    <name evidence="1" type="primary">groES</name>
    <name evidence="1" type="synonym">groS</name>
    <name type="ordered locus">ASA_3432</name>
</gene>
<comment type="function">
    <text evidence="1">Together with the chaperonin GroEL, plays an essential role in assisting protein folding. The GroEL-GroES system forms a nano-cage that allows encapsulation of the non-native substrate proteins and provides a physical environment optimized to promote and accelerate protein folding. GroES binds to the apical surface of the GroEL ring, thereby capping the opening of the GroEL channel.</text>
</comment>
<comment type="subunit">
    <text evidence="1">Heptamer of 7 subunits arranged in a ring. Interacts with the chaperonin GroEL.</text>
</comment>
<comment type="subcellular location">
    <subcellularLocation>
        <location evidence="1">Cytoplasm</location>
    </subcellularLocation>
</comment>
<comment type="similarity">
    <text evidence="1">Belongs to the GroES chaperonin family.</text>
</comment>
<reference key="1">
    <citation type="journal article" date="2008" name="BMC Genomics">
        <title>The genome of Aeromonas salmonicida subsp. salmonicida A449: insights into the evolution of a fish pathogen.</title>
        <authorList>
            <person name="Reith M.E."/>
            <person name="Singh R.K."/>
            <person name="Curtis B."/>
            <person name="Boyd J.M."/>
            <person name="Bouevitch A."/>
            <person name="Kimball J."/>
            <person name="Munholland J."/>
            <person name="Murphy C."/>
            <person name="Sarty D."/>
            <person name="Williams J."/>
            <person name="Nash J.H."/>
            <person name="Johnson S.C."/>
            <person name="Brown L.L."/>
        </authorList>
    </citation>
    <scope>NUCLEOTIDE SEQUENCE [LARGE SCALE GENOMIC DNA]</scope>
    <source>
        <strain>A449</strain>
    </source>
</reference>
<proteinExistence type="inferred from homology"/>